<reference key="1">
    <citation type="journal article" date="2005" name="PLoS Genet.">
        <title>Life in hot carbon monoxide: the complete genome sequence of Carboxydothermus hydrogenoformans Z-2901.</title>
        <authorList>
            <person name="Wu M."/>
            <person name="Ren Q."/>
            <person name="Durkin A.S."/>
            <person name="Daugherty S.C."/>
            <person name="Brinkac L.M."/>
            <person name="Dodson R.J."/>
            <person name="Madupu R."/>
            <person name="Sullivan S.A."/>
            <person name="Kolonay J.F."/>
            <person name="Nelson W.C."/>
            <person name="Tallon L.J."/>
            <person name="Jones K.M."/>
            <person name="Ulrich L.E."/>
            <person name="Gonzalez J.M."/>
            <person name="Zhulin I.B."/>
            <person name="Robb F.T."/>
            <person name="Eisen J.A."/>
        </authorList>
    </citation>
    <scope>NUCLEOTIDE SEQUENCE [LARGE SCALE GENOMIC DNA]</scope>
    <source>
        <strain>ATCC BAA-161 / DSM 6008 / Z-2901</strain>
    </source>
</reference>
<name>SELD_CARHZ</name>
<feature type="chain" id="PRO_1000051596" description="Selenide, water dikinase">
    <location>
        <begin position="1"/>
        <end position="343"/>
    </location>
</feature>
<feature type="active site" evidence="2">
    <location>
        <position position="15"/>
    </location>
</feature>
<feature type="binding site" description="in other chain" evidence="2">
    <location>
        <position position="18"/>
    </location>
    <ligand>
        <name>ATP</name>
        <dbReference type="ChEBI" id="CHEBI:30616"/>
        <note>ligand shared between dimeric partners</note>
    </ligand>
</feature>
<feature type="binding site" description="in other chain" evidence="2">
    <location>
        <begin position="45"/>
        <end position="47"/>
    </location>
    <ligand>
        <name>ATP</name>
        <dbReference type="ChEBI" id="CHEBI:30616"/>
        <note>ligand shared between dimeric partners</note>
    </ligand>
</feature>
<feature type="binding site" evidence="2">
    <location>
        <position position="48"/>
    </location>
    <ligand>
        <name>Mg(2+)</name>
        <dbReference type="ChEBI" id="CHEBI:18420"/>
    </ligand>
</feature>
<feature type="binding site" description="in other chain" evidence="2">
    <location>
        <position position="65"/>
    </location>
    <ligand>
        <name>ATP</name>
        <dbReference type="ChEBI" id="CHEBI:30616"/>
        <note>ligand shared between dimeric partners</note>
    </ligand>
</feature>
<feature type="binding site" description="in other chain" evidence="2">
    <location>
        <position position="88"/>
    </location>
    <ligand>
        <name>ATP</name>
        <dbReference type="ChEBI" id="CHEBI:30616"/>
        <note>ligand shared between dimeric partners</note>
    </ligand>
</feature>
<feature type="binding site" evidence="2">
    <location>
        <position position="88"/>
    </location>
    <ligand>
        <name>Mg(2+)</name>
        <dbReference type="ChEBI" id="CHEBI:18420"/>
    </ligand>
</feature>
<feature type="binding site" evidence="2">
    <location>
        <begin position="135"/>
        <end position="137"/>
    </location>
    <ligand>
        <name>ATP</name>
        <dbReference type="ChEBI" id="CHEBI:30616"/>
        <note>ligand shared between dimeric partners</note>
    </ligand>
</feature>
<feature type="binding site" evidence="2">
    <location>
        <position position="223"/>
    </location>
    <ligand>
        <name>Mg(2+)</name>
        <dbReference type="ChEBI" id="CHEBI:18420"/>
    </ligand>
</feature>
<feature type="site" description="Important for catalytic activity" evidence="2">
    <location>
        <position position="18"/>
    </location>
</feature>
<feature type="non-standard amino acid" description="Selenocysteine" evidence="1">
    <location>
        <position position="15"/>
    </location>
</feature>
<keyword id="KW-0067">ATP-binding</keyword>
<keyword id="KW-0418">Kinase</keyword>
<keyword id="KW-0460">Magnesium</keyword>
<keyword id="KW-0479">Metal-binding</keyword>
<keyword id="KW-0547">Nucleotide-binding</keyword>
<keyword id="KW-1185">Reference proteome</keyword>
<keyword id="KW-0711">Selenium</keyword>
<keyword id="KW-0712">Selenocysteine</keyword>
<keyword id="KW-0808">Transferase</keyword>
<evidence type="ECO:0000255" key="1"/>
<evidence type="ECO:0000255" key="2">
    <source>
        <dbReference type="HAMAP-Rule" id="MF_00625"/>
    </source>
</evidence>
<sequence length="343" mass="36685">MEAVKLTQLVSCAGUAAKMSPETLAQVLRYLPEINDPNALVGTNTADDAAVYRISDEQAIVLTVDYFTPVVDDPYYFGVIAAANSLSDIYAMGAKPLFALNVVGFPKKLPPEILATILKGGADKAREAGIPVLGGHTVDDAEPKYGMVVCGLVHPDKIVKNHPPHPGDSLILTKPLGIGVLTTGMKRGIVPENTAKKVMEVMETLNDKAAEVMVEVGVSAATDITGFGLLGHLKEMLQEEFGAEIYLTKIPAIEGAWEFAGMRVFPGGAKNNLNYLLPHLDFAGEFAEEEKLFLADPQTSGGLLMAVSQEKKEELVKKLQQKGVLAAEIGIITGNKGKIVVKR</sequence>
<protein>
    <recommendedName>
        <fullName evidence="2">Selenide, water dikinase</fullName>
        <ecNumber evidence="2">2.7.9.3</ecNumber>
    </recommendedName>
    <alternativeName>
        <fullName evidence="2">Selenium donor protein</fullName>
    </alternativeName>
    <alternativeName>
        <fullName evidence="2">Selenophosphate synthase</fullName>
    </alternativeName>
</protein>
<comment type="function">
    <text evidence="2">Synthesizes selenophosphate from selenide and ATP.</text>
</comment>
<comment type="catalytic activity">
    <reaction evidence="2">
        <text>hydrogenselenide + ATP + H2O = selenophosphate + AMP + phosphate + 2 H(+)</text>
        <dbReference type="Rhea" id="RHEA:18737"/>
        <dbReference type="ChEBI" id="CHEBI:15377"/>
        <dbReference type="ChEBI" id="CHEBI:15378"/>
        <dbReference type="ChEBI" id="CHEBI:16144"/>
        <dbReference type="ChEBI" id="CHEBI:29317"/>
        <dbReference type="ChEBI" id="CHEBI:30616"/>
        <dbReference type="ChEBI" id="CHEBI:43474"/>
        <dbReference type="ChEBI" id="CHEBI:456215"/>
        <dbReference type="EC" id="2.7.9.3"/>
    </reaction>
</comment>
<comment type="cofactor">
    <cofactor evidence="2">
        <name>Mg(2+)</name>
        <dbReference type="ChEBI" id="CHEBI:18420"/>
    </cofactor>
    <text evidence="2">Binds 1 Mg(2+) ion per monomer.</text>
</comment>
<comment type="subunit">
    <text evidence="2">Homodimer.</text>
</comment>
<comment type="similarity">
    <text evidence="2">Belongs to the selenophosphate synthase 1 family. Class I subfamily.</text>
</comment>
<gene>
    <name evidence="2" type="primary">selD</name>
    <name type="ordered locus">CHY_2058</name>
</gene>
<proteinExistence type="inferred from homology"/>
<dbReference type="EC" id="2.7.9.3" evidence="2"/>
<dbReference type="EMBL" id="CP000141">
    <property type="protein sequence ID" value="ABB15977.1"/>
    <property type="molecule type" value="Genomic_DNA"/>
</dbReference>
<dbReference type="RefSeq" id="WP_011344950.1">
    <property type="nucleotide sequence ID" value="NC_007503.1"/>
</dbReference>
<dbReference type="STRING" id="246194.CHY_2058"/>
<dbReference type="KEGG" id="chy:CHY_2058"/>
<dbReference type="eggNOG" id="COG0709">
    <property type="taxonomic scope" value="Bacteria"/>
</dbReference>
<dbReference type="HOGENOM" id="CLU_032859_0_1_9"/>
<dbReference type="InParanoid" id="Q3AAF7"/>
<dbReference type="OrthoDB" id="9772934at2"/>
<dbReference type="Proteomes" id="UP000002706">
    <property type="component" value="Chromosome"/>
</dbReference>
<dbReference type="GO" id="GO:0005737">
    <property type="term" value="C:cytoplasm"/>
    <property type="evidence" value="ECO:0007669"/>
    <property type="project" value="TreeGrafter"/>
</dbReference>
<dbReference type="GO" id="GO:0005524">
    <property type="term" value="F:ATP binding"/>
    <property type="evidence" value="ECO:0007669"/>
    <property type="project" value="UniProtKB-UniRule"/>
</dbReference>
<dbReference type="GO" id="GO:0000287">
    <property type="term" value="F:magnesium ion binding"/>
    <property type="evidence" value="ECO:0007669"/>
    <property type="project" value="UniProtKB-UniRule"/>
</dbReference>
<dbReference type="GO" id="GO:0004756">
    <property type="term" value="F:selenide, water dikinase activity"/>
    <property type="evidence" value="ECO:0007669"/>
    <property type="project" value="UniProtKB-UniRule"/>
</dbReference>
<dbReference type="GO" id="GO:0016260">
    <property type="term" value="P:selenocysteine biosynthetic process"/>
    <property type="evidence" value="ECO:0007669"/>
    <property type="project" value="InterPro"/>
</dbReference>
<dbReference type="CDD" id="cd02195">
    <property type="entry name" value="SelD"/>
    <property type="match status" value="1"/>
</dbReference>
<dbReference type="FunFam" id="3.30.1330.10:FF:000003">
    <property type="entry name" value="Selenide, water dikinase"/>
    <property type="match status" value="1"/>
</dbReference>
<dbReference type="Gene3D" id="3.90.650.10">
    <property type="entry name" value="PurM-like C-terminal domain"/>
    <property type="match status" value="1"/>
</dbReference>
<dbReference type="Gene3D" id="3.30.1330.10">
    <property type="entry name" value="PurM-like, N-terminal domain"/>
    <property type="match status" value="1"/>
</dbReference>
<dbReference type="HAMAP" id="MF_00625">
    <property type="entry name" value="SelD"/>
    <property type="match status" value="1"/>
</dbReference>
<dbReference type="InterPro" id="IPR010918">
    <property type="entry name" value="PurM-like_C_dom"/>
</dbReference>
<dbReference type="InterPro" id="IPR036676">
    <property type="entry name" value="PurM-like_C_sf"/>
</dbReference>
<dbReference type="InterPro" id="IPR016188">
    <property type="entry name" value="PurM-like_N"/>
</dbReference>
<dbReference type="InterPro" id="IPR036921">
    <property type="entry name" value="PurM-like_N_sf"/>
</dbReference>
<dbReference type="InterPro" id="IPR023061">
    <property type="entry name" value="SelD_I"/>
</dbReference>
<dbReference type="InterPro" id="IPR004536">
    <property type="entry name" value="SPS/SelD"/>
</dbReference>
<dbReference type="NCBIfam" id="NF002098">
    <property type="entry name" value="PRK00943.1"/>
    <property type="match status" value="1"/>
</dbReference>
<dbReference type="NCBIfam" id="TIGR00476">
    <property type="entry name" value="selD"/>
    <property type="match status" value="1"/>
</dbReference>
<dbReference type="PANTHER" id="PTHR10256:SF0">
    <property type="entry name" value="INACTIVE SELENIDE, WATER DIKINASE-LIKE PROTEIN-RELATED"/>
    <property type="match status" value="1"/>
</dbReference>
<dbReference type="PANTHER" id="PTHR10256">
    <property type="entry name" value="SELENIDE, WATER DIKINASE"/>
    <property type="match status" value="1"/>
</dbReference>
<dbReference type="Pfam" id="PF00586">
    <property type="entry name" value="AIRS"/>
    <property type="match status" value="1"/>
</dbReference>
<dbReference type="Pfam" id="PF02769">
    <property type="entry name" value="AIRS_C"/>
    <property type="match status" value="1"/>
</dbReference>
<dbReference type="PIRSF" id="PIRSF036407">
    <property type="entry name" value="Selenphspht_syn"/>
    <property type="match status" value="1"/>
</dbReference>
<dbReference type="SUPFAM" id="SSF56042">
    <property type="entry name" value="PurM C-terminal domain-like"/>
    <property type="match status" value="1"/>
</dbReference>
<dbReference type="SUPFAM" id="SSF55326">
    <property type="entry name" value="PurM N-terminal domain-like"/>
    <property type="match status" value="1"/>
</dbReference>
<organism>
    <name type="scientific">Carboxydothermus hydrogenoformans (strain ATCC BAA-161 / DSM 6008 / Z-2901)</name>
    <dbReference type="NCBI Taxonomy" id="246194"/>
    <lineage>
        <taxon>Bacteria</taxon>
        <taxon>Bacillati</taxon>
        <taxon>Bacillota</taxon>
        <taxon>Clostridia</taxon>
        <taxon>Thermoanaerobacterales</taxon>
        <taxon>Thermoanaerobacteraceae</taxon>
        <taxon>Carboxydothermus</taxon>
    </lineage>
</organism>
<accession>Q3AAF7</accession>